<sequence>MPRAQKGLLLVECDPTVKQLILNMDEQSPGIVIEEIDEERLLVNESRLEQVKAELERRLEENTYQVEE</sequence>
<feature type="chain" id="PRO_0000119284" description="General transcription and DNA repair factor IIH subunit tfb5">
    <location>
        <begin position="1"/>
        <end position="68"/>
    </location>
</feature>
<name>TFB5_SCHPO</name>
<organism>
    <name type="scientific">Schizosaccharomyces pombe (strain 972 / ATCC 24843)</name>
    <name type="common">Fission yeast</name>
    <dbReference type="NCBI Taxonomy" id="284812"/>
    <lineage>
        <taxon>Eukaryota</taxon>
        <taxon>Fungi</taxon>
        <taxon>Dikarya</taxon>
        <taxon>Ascomycota</taxon>
        <taxon>Taphrinomycotina</taxon>
        <taxon>Schizosaccharomycetes</taxon>
        <taxon>Schizosaccharomycetales</taxon>
        <taxon>Schizosaccharomycetaceae</taxon>
        <taxon>Schizosaccharomyces</taxon>
    </lineage>
</organism>
<comment type="function">
    <text evidence="2">Component of the general transcription and DNA repair factor IIH (TFIIH) core complex, which is involved in general and transcription-coupled nucleotide excision repair (NER) of damaged DNA and, when complexed to TFIIK, in RNA transcription by RNA polymerase II. In NER, TFIIH acts by opening DNA around the lesion to allow the excision of the damaged oligonucleotide and its replacement by a new DNA fragment. In transcription, TFIIH has an essential role in transcription initiation. When the pre-initiation complex (PIC) has been established, TFIIH is required for promoter opening and promoter escape. Phosphorylation of the C-terminal tail (CTD) of the largest subunit of RNA polymerase II by the kinase module TFIIK controls the initiation of transcription.</text>
</comment>
<comment type="subunit">
    <text evidence="2">Component of the 7-subunit TFIIH core complex composed of XPB/ptr8, XPD/rad15, ssl1, tfb1, tfb2, tfb4 and tfb5, which is active in NER. The core complex associates with the 3-subunit CTD-kinase module TFIIK composed of mcs2/cyclin H, mcs6/cdk7 and pmh1/tfb3 to form the 10-subunit holoenzyme (holo-TFIIH) active in transcription.</text>
</comment>
<comment type="subcellular location">
    <subcellularLocation>
        <location evidence="1">Nucleus</location>
    </subcellularLocation>
</comment>
<comment type="similarity">
    <text evidence="3">Belongs to the TFB5 family.</text>
</comment>
<keyword id="KW-0227">DNA damage</keyword>
<keyword id="KW-0234">DNA repair</keyword>
<keyword id="KW-0539">Nucleus</keyword>
<keyword id="KW-1185">Reference proteome</keyword>
<keyword id="KW-0804">Transcription</keyword>
<keyword id="KW-0805">Transcription regulation</keyword>
<accession>Q9HDW3</accession>
<proteinExistence type="inferred from homology"/>
<dbReference type="EMBL" id="CU329671">
    <property type="protein sequence ID" value="CAC22107.1"/>
    <property type="molecule type" value="Genomic_DNA"/>
</dbReference>
<dbReference type="RefSeq" id="NP_596155.1">
    <property type="nucleotide sequence ID" value="NM_001022074.2"/>
</dbReference>
<dbReference type="SMR" id="Q9HDW3"/>
<dbReference type="BioGRID" id="276788">
    <property type="interactions" value="1"/>
</dbReference>
<dbReference type="FunCoup" id="Q9HDW3">
    <property type="interactions" value="85"/>
</dbReference>
<dbReference type="STRING" id="284812.Q9HDW3"/>
<dbReference type="iPTMnet" id="Q9HDW3"/>
<dbReference type="PaxDb" id="4896-SPBC32F12.15.1"/>
<dbReference type="EnsemblFungi" id="SPBC32F12.15.1">
    <property type="protein sequence ID" value="SPBC32F12.15.1:pep"/>
    <property type="gene ID" value="SPBC32F12.15"/>
</dbReference>
<dbReference type="GeneID" id="2540257"/>
<dbReference type="KEGG" id="spo:2540257"/>
<dbReference type="PomBase" id="SPBC32F12.15">
    <property type="gene designation" value="tfb5"/>
</dbReference>
<dbReference type="VEuPathDB" id="FungiDB:SPBC32F12.15"/>
<dbReference type="eggNOG" id="KOG3451">
    <property type="taxonomic scope" value="Eukaryota"/>
</dbReference>
<dbReference type="HOGENOM" id="CLU_166246_1_1_1"/>
<dbReference type="InParanoid" id="Q9HDW3"/>
<dbReference type="OMA" id="IYNPMDE"/>
<dbReference type="PhylomeDB" id="Q9HDW3"/>
<dbReference type="Reactome" id="R-SPO-113418">
    <property type="pathway name" value="Formation of the Early Elongation Complex"/>
</dbReference>
<dbReference type="Reactome" id="R-SPO-5696395">
    <property type="pathway name" value="Formation of Incision Complex in GG-NER"/>
</dbReference>
<dbReference type="Reactome" id="R-SPO-5696400">
    <property type="pathway name" value="Dual Incision in GG-NER"/>
</dbReference>
<dbReference type="Reactome" id="R-SPO-674695">
    <property type="pathway name" value="RNA Polymerase II Pre-transcription Events"/>
</dbReference>
<dbReference type="Reactome" id="R-SPO-6781823">
    <property type="pathway name" value="Formation of TC-NER Pre-Incision Complex"/>
</dbReference>
<dbReference type="Reactome" id="R-SPO-6782135">
    <property type="pathway name" value="Dual incision in TC-NER"/>
</dbReference>
<dbReference type="Reactome" id="R-SPO-6782210">
    <property type="pathway name" value="Gap-filling DNA repair synthesis and ligation in TC-NER"/>
</dbReference>
<dbReference type="Reactome" id="R-SPO-6796648">
    <property type="pathway name" value="TP53 Regulates Transcription of DNA Repair Genes"/>
</dbReference>
<dbReference type="Reactome" id="R-SPO-72086">
    <property type="pathway name" value="mRNA Capping"/>
</dbReference>
<dbReference type="Reactome" id="R-SPO-73772">
    <property type="pathway name" value="RNA Polymerase I Promoter Escape"/>
</dbReference>
<dbReference type="Reactome" id="R-SPO-73776">
    <property type="pathway name" value="RNA Polymerase II Promoter Escape"/>
</dbReference>
<dbReference type="Reactome" id="R-SPO-73779">
    <property type="pathway name" value="RNA Polymerase II Transcription Pre-Initiation And Promoter Opening"/>
</dbReference>
<dbReference type="Reactome" id="R-SPO-75953">
    <property type="pathway name" value="RNA Polymerase II Transcription Initiation"/>
</dbReference>
<dbReference type="Reactome" id="R-SPO-76042">
    <property type="pathway name" value="RNA Polymerase II Transcription Initiation And Promoter Clearance"/>
</dbReference>
<dbReference type="Reactome" id="R-SPO-77075">
    <property type="pathway name" value="RNA Pol II CTD phosphorylation and interaction with CE"/>
</dbReference>
<dbReference type="PRO" id="PR:Q9HDW3"/>
<dbReference type="Proteomes" id="UP000002485">
    <property type="component" value="Chromosome II"/>
</dbReference>
<dbReference type="GO" id="GO:0005829">
    <property type="term" value="C:cytosol"/>
    <property type="evidence" value="ECO:0007005"/>
    <property type="project" value="PomBase"/>
</dbReference>
<dbReference type="GO" id="GO:0005634">
    <property type="term" value="C:nucleus"/>
    <property type="evidence" value="ECO:0007005"/>
    <property type="project" value="PomBase"/>
</dbReference>
<dbReference type="GO" id="GO:0000439">
    <property type="term" value="C:transcription factor TFIIH core complex"/>
    <property type="evidence" value="ECO:0000318"/>
    <property type="project" value="GO_Central"/>
</dbReference>
<dbReference type="GO" id="GO:0005675">
    <property type="term" value="C:transcription factor TFIIH holo complex"/>
    <property type="evidence" value="ECO:0000318"/>
    <property type="project" value="GO_Central"/>
</dbReference>
<dbReference type="GO" id="GO:0016251">
    <property type="term" value="F:RNA polymerase II general transcription initiation factor activity"/>
    <property type="evidence" value="ECO:0000269"/>
    <property type="project" value="PomBase"/>
</dbReference>
<dbReference type="GO" id="GO:0006294">
    <property type="term" value="P:nucleotide-excision repair, preincision complex assembly"/>
    <property type="evidence" value="ECO:0000318"/>
    <property type="project" value="GO_Central"/>
</dbReference>
<dbReference type="GO" id="GO:0006366">
    <property type="term" value="P:transcription by RNA polymerase II"/>
    <property type="evidence" value="ECO:0000318"/>
    <property type="project" value="GO_Central"/>
</dbReference>
<dbReference type="GO" id="GO:0006367">
    <property type="term" value="P:transcription initiation at RNA polymerase II promoter"/>
    <property type="evidence" value="ECO:0000269"/>
    <property type="project" value="PomBase"/>
</dbReference>
<dbReference type="FunFam" id="3.30.70.1220:FF:000002">
    <property type="entry name" value="RNA polymerase II transcription factor B subunit 5"/>
    <property type="match status" value="1"/>
</dbReference>
<dbReference type="Gene3D" id="3.30.70.1220">
    <property type="entry name" value="TFB5-like"/>
    <property type="match status" value="1"/>
</dbReference>
<dbReference type="InterPro" id="IPR035935">
    <property type="entry name" value="TFB5-like_sf"/>
</dbReference>
<dbReference type="InterPro" id="IPR009400">
    <property type="entry name" value="TFIIH_TTDA/Tfb5"/>
</dbReference>
<dbReference type="PANTHER" id="PTHR28580">
    <property type="entry name" value="GENERAL TRANSCRIPTION FACTOR IIH SUBUNIT 5"/>
    <property type="match status" value="1"/>
</dbReference>
<dbReference type="PANTHER" id="PTHR28580:SF1">
    <property type="entry name" value="GENERAL TRANSCRIPTION FACTOR IIH SUBUNIT 5"/>
    <property type="match status" value="1"/>
</dbReference>
<dbReference type="Pfam" id="PF06331">
    <property type="entry name" value="Tfb5"/>
    <property type="match status" value="1"/>
</dbReference>
<dbReference type="SMART" id="SM01395">
    <property type="entry name" value="Tbf5"/>
    <property type="match status" value="1"/>
</dbReference>
<dbReference type="SUPFAM" id="SSF142897">
    <property type="entry name" value="TFB5-like"/>
    <property type="match status" value="1"/>
</dbReference>
<gene>
    <name type="primary">tfb5</name>
    <name type="ORF">SPBC32F12.15</name>
</gene>
<protein>
    <recommendedName>
        <fullName>General transcription and DNA repair factor IIH subunit tfb5</fullName>
        <shortName>TFIIH subunit tfb5</shortName>
    </recommendedName>
    <alternativeName>
        <fullName>RNA polymerase II transcription factor B subunit 5</fullName>
    </alternativeName>
</protein>
<evidence type="ECO:0000250" key="1"/>
<evidence type="ECO:0000250" key="2">
    <source>
        <dbReference type="UniProtKB" id="Q3E7C1"/>
    </source>
</evidence>
<evidence type="ECO:0000305" key="3"/>
<reference key="1">
    <citation type="journal article" date="2002" name="Nature">
        <title>The genome sequence of Schizosaccharomyces pombe.</title>
        <authorList>
            <person name="Wood V."/>
            <person name="Gwilliam R."/>
            <person name="Rajandream M.A."/>
            <person name="Lyne M.H."/>
            <person name="Lyne R."/>
            <person name="Stewart A."/>
            <person name="Sgouros J.G."/>
            <person name="Peat N."/>
            <person name="Hayles J."/>
            <person name="Baker S.G."/>
            <person name="Basham D."/>
            <person name="Bowman S."/>
            <person name="Brooks K."/>
            <person name="Brown D."/>
            <person name="Brown S."/>
            <person name="Chillingworth T."/>
            <person name="Churcher C.M."/>
            <person name="Collins M."/>
            <person name="Connor R."/>
            <person name="Cronin A."/>
            <person name="Davis P."/>
            <person name="Feltwell T."/>
            <person name="Fraser A."/>
            <person name="Gentles S."/>
            <person name="Goble A."/>
            <person name="Hamlin N."/>
            <person name="Harris D.E."/>
            <person name="Hidalgo J."/>
            <person name="Hodgson G."/>
            <person name="Holroyd S."/>
            <person name="Hornsby T."/>
            <person name="Howarth S."/>
            <person name="Huckle E.J."/>
            <person name="Hunt S."/>
            <person name="Jagels K."/>
            <person name="James K.D."/>
            <person name="Jones L."/>
            <person name="Jones M."/>
            <person name="Leather S."/>
            <person name="McDonald S."/>
            <person name="McLean J."/>
            <person name="Mooney P."/>
            <person name="Moule S."/>
            <person name="Mungall K.L."/>
            <person name="Murphy L.D."/>
            <person name="Niblett D."/>
            <person name="Odell C."/>
            <person name="Oliver K."/>
            <person name="O'Neil S."/>
            <person name="Pearson D."/>
            <person name="Quail M.A."/>
            <person name="Rabbinowitsch E."/>
            <person name="Rutherford K.M."/>
            <person name="Rutter S."/>
            <person name="Saunders D."/>
            <person name="Seeger K."/>
            <person name="Sharp S."/>
            <person name="Skelton J."/>
            <person name="Simmonds M.N."/>
            <person name="Squares R."/>
            <person name="Squares S."/>
            <person name="Stevens K."/>
            <person name="Taylor K."/>
            <person name="Taylor R.G."/>
            <person name="Tivey A."/>
            <person name="Walsh S.V."/>
            <person name="Warren T."/>
            <person name="Whitehead S."/>
            <person name="Woodward J.R."/>
            <person name="Volckaert G."/>
            <person name="Aert R."/>
            <person name="Robben J."/>
            <person name="Grymonprez B."/>
            <person name="Weltjens I."/>
            <person name="Vanstreels E."/>
            <person name="Rieger M."/>
            <person name="Schaefer M."/>
            <person name="Mueller-Auer S."/>
            <person name="Gabel C."/>
            <person name="Fuchs M."/>
            <person name="Duesterhoeft A."/>
            <person name="Fritzc C."/>
            <person name="Holzer E."/>
            <person name="Moestl D."/>
            <person name="Hilbert H."/>
            <person name="Borzym K."/>
            <person name="Langer I."/>
            <person name="Beck A."/>
            <person name="Lehrach H."/>
            <person name="Reinhardt R."/>
            <person name="Pohl T.M."/>
            <person name="Eger P."/>
            <person name="Zimmermann W."/>
            <person name="Wedler H."/>
            <person name="Wambutt R."/>
            <person name="Purnelle B."/>
            <person name="Goffeau A."/>
            <person name="Cadieu E."/>
            <person name="Dreano S."/>
            <person name="Gloux S."/>
            <person name="Lelaure V."/>
            <person name="Mottier S."/>
            <person name="Galibert F."/>
            <person name="Aves S.J."/>
            <person name="Xiang Z."/>
            <person name="Hunt C."/>
            <person name="Moore K."/>
            <person name="Hurst S.M."/>
            <person name="Lucas M."/>
            <person name="Rochet M."/>
            <person name="Gaillardin C."/>
            <person name="Tallada V.A."/>
            <person name="Garzon A."/>
            <person name="Thode G."/>
            <person name="Daga R.R."/>
            <person name="Cruzado L."/>
            <person name="Jimenez J."/>
            <person name="Sanchez M."/>
            <person name="del Rey F."/>
            <person name="Benito J."/>
            <person name="Dominguez A."/>
            <person name="Revuelta J.L."/>
            <person name="Moreno S."/>
            <person name="Armstrong J."/>
            <person name="Forsburg S.L."/>
            <person name="Cerutti L."/>
            <person name="Lowe T."/>
            <person name="McCombie W.R."/>
            <person name="Paulsen I."/>
            <person name="Potashkin J."/>
            <person name="Shpakovski G.V."/>
            <person name="Ussery D."/>
            <person name="Barrell B.G."/>
            <person name="Nurse P."/>
        </authorList>
    </citation>
    <scope>NUCLEOTIDE SEQUENCE [LARGE SCALE GENOMIC DNA]</scope>
    <source>
        <strain>972 / ATCC 24843</strain>
    </source>
</reference>